<name>CESA5_ORYSI</name>
<gene>
    <name type="primary">CESA5</name>
    <name type="ORF">OsI_013725</name>
</gene>
<protein>
    <recommendedName>
        <fullName>Probable cellulose synthase A catalytic subunit 5 [UDP-forming]</fullName>
        <ecNumber evidence="5">2.4.1.12</ecNumber>
    </recommendedName>
    <alternativeName>
        <fullName>OsCesA5</fullName>
    </alternativeName>
</protein>
<sequence length="1092" mass="123396">MEASAGLVAGSHNRNELVVIRRDGEPGPKPVKHTNGQVCQICGDDVGLTPDGEPFVACNECAFPVCRDCYEYERREGTQNCPQCKTRFKRLKGCARVPGDEEEEDVDDLENEFNWRDKTDSQYVAESMLHGHMSYGRGGDLDGVPQHFQPIPNVPLLTNGEMADDIPPEQHALVPSFMGGGGKRIHPLPYADPNLPVQPRSMDPSKDLAAYGYGSVAWKERMESWKQKQERLHQMRNDGGGKDWDGDGDDADLPLMDEARQPLSRKIPISSSLVNPYRMIIIIRLVVLGFFFHYRVMHPVPDAFALWLISVICEIWFAMSWILDQFPKWFPIERETYLDRLTLRFDKEGQQSQLAPVDFFVSTVDPMKEPPLVTANTVLSILAVDYPVDKVSCYVSDDGAAMLTFEALSETSEFAKKWVPFCKRYSLEPRAPEWYFQQKIDYLKDKVAPNFVRERRAMKREYEEFKVRINALVAKAQKVPEEGWTMQDGTPWPGNNVRDHPGMIQVFLGQSGGHDVEGNELPRLVYVSREKRPGYNHHKKAGAMNALVRVSAVLTNAPYMLNLDCDHYINNSKAIKEAMCFMMDPLVGKKVCYVQFPQRFDGIDRHDRYANRNVVFFDINMKGLDGIQGPIYVGTGCVFRRQALYGYDAPKSKKPPSRTCNCWPKWCICCCCFGNRTNKKKTAKPKTEKKKRLFFKRAENQSPAYALGEIDEGAPGAENEKAGIVNQQKLEKKFGQSSVFVASTLLENGGTLKSASPASLLKEAIHVISCGYEDKTDWGKEIGWIYGSVTEDILTGFKMHCHGWRSIYCIPKRAAFKGSAPLNLSDRLHQVLRWALGSIEIFFSNHCPLWYGYGGGLKCLERFSYINSIVYPWTSIPLLAYCTLPAICLLTGKFITPELTNIASLWFMSLFICIFATGILEMRWSGVGIDDWWRNEQFWVIGGVSSHLFAVFQGLLKVIAGIDTSFTVTSKGGDDEEFSELYTFKWTTLLIPPTTLLLLNFIGVVAGVSNAINNGYESWGPLFGKLFFAFWVIVHLYPFLKGLVGRQNRTPTIVIVWSILLASIFSLLWVRIDPFLAKNDGPLLEECGLDCN</sequence>
<evidence type="ECO:0000250" key="1">
    <source>
        <dbReference type="UniProtKB" id="Q941L0"/>
    </source>
</evidence>
<evidence type="ECO:0000250" key="2">
    <source>
        <dbReference type="UniProtKB" id="Q9SWW6"/>
    </source>
</evidence>
<evidence type="ECO:0000255" key="3"/>
<evidence type="ECO:0000255" key="4">
    <source>
        <dbReference type="PROSITE-ProRule" id="PRU00175"/>
    </source>
</evidence>
<evidence type="ECO:0000305" key="5"/>
<feature type="chain" id="PRO_0000319364" description="Probable cellulose synthase A catalytic subunit 5 [UDP-forming]">
    <location>
        <begin position="1"/>
        <end position="1092"/>
    </location>
</feature>
<feature type="topological domain" description="Cytoplasmic" evidence="3">
    <location>
        <begin position="1"/>
        <end position="279"/>
    </location>
</feature>
<feature type="transmembrane region" description="Helical" evidence="3">
    <location>
        <begin position="280"/>
        <end position="300"/>
    </location>
</feature>
<feature type="topological domain" description="Extracellular" evidence="3">
    <location>
        <begin position="301"/>
        <end position="302"/>
    </location>
</feature>
<feature type="transmembrane region" description="Helical" evidence="3">
    <location>
        <begin position="303"/>
        <end position="323"/>
    </location>
</feature>
<feature type="topological domain" description="Cytoplasmic" evidence="3">
    <location>
        <begin position="324"/>
        <end position="868"/>
    </location>
</feature>
<feature type="transmembrane region" description="Helical" evidence="3">
    <location>
        <begin position="869"/>
        <end position="889"/>
    </location>
</feature>
<feature type="topological domain" description="Extracellular" evidence="3">
    <location>
        <begin position="890"/>
        <end position="901"/>
    </location>
</feature>
<feature type="transmembrane region" description="Helical" evidence="3">
    <location>
        <begin position="902"/>
        <end position="922"/>
    </location>
</feature>
<feature type="topological domain" description="Cytoplasmic" evidence="3">
    <location>
        <begin position="923"/>
        <end position="938"/>
    </location>
</feature>
<feature type="transmembrane region" description="Helical" evidence="3">
    <location>
        <begin position="939"/>
        <end position="959"/>
    </location>
</feature>
<feature type="topological domain" description="Extracellular" evidence="3">
    <location>
        <begin position="960"/>
        <end position="987"/>
    </location>
</feature>
<feature type="transmembrane region" description="Helical" evidence="3">
    <location>
        <begin position="988"/>
        <end position="1008"/>
    </location>
</feature>
<feature type="topological domain" description="Cytoplasmic" evidence="3">
    <location>
        <begin position="1009"/>
        <end position="1019"/>
    </location>
</feature>
<feature type="transmembrane region" description="Helical" evidence="3">
    <location>
        <begin position="1020"/>
        <end position="1040"/>
    </location>
</feature>
<feature type="topological domain" description="Extracellular" evidence="3">
    <location>
        <begin position="1041"/>
        <end position="1049"/>
    </location>
</feature>
<feature type="transmembrane region" description="Helical" evidence="3">
    <location>
        <begin position="1050"/>
        <end position="1070"/>
    </location>
</feature>
<feature type="topological domain" description="Cytoplasmic" evidence="3">
    <location>
        <begin position="1071"/>
        <end position="1092"/>
    </location>
</feature>
<feature type="zinc finger region" description="RING-type; degenerate" evidence="4">
    <location>
        <begin position="39"/>
        <end position="85"/>
    </location>
</feature>
<feature type="coiled-coil region" evidence="3">
    <location>
        <begin position="450"/>
        <end position="479"/>
    </location>
</feature>
<feature type="active site" evidence="3">
    <location>
        <position position="398"/>
    </location>
</feature>
<feature type="active site" evidence="3">
    <location>
        <position position="792"/>
    </location>
</feature>
<feature type="binding site" evidence="2">
    <location>
        <position position="39"/>
    </location>
    <ligand>
        <name>Zn(2+)</name>
        <dbReference type="ChEBI" id="CHEBI:29105"/>
        <label>1</label>
    </ligand>
</feature>
<feature type="binding site" evidence="2">
    <location>
        <position position="42"/>
    </location>
    <ligand>
        <name>Zn(2+)</name>
        <dbReference type="ChEBI" id="CHEBI:29105"/>
        <label>1</label>
    </ligand>
</feature>
<feature type="binding site" evidence="2">
    <location>
        <position position="58"/>
    </location>
    <ligand>
        <name>Zn(2+)</name>
        <dbReference type="ChEBI" id="CHEBI:29105"/>
        <label>2</label>
    </ligand>
</feature>
<feature type="binding site" evidence="2">
    <location>
        <position position="61"/>
    </location>
    <ligand>
        <name>Zn(2+)</name>
        <dbReference type="ChEBI" id="CHEBI:29105"/>
        <label>2</label>
    </ligand>
</feature>
<feature type="binding site" evidence="2">
    <location>
        <position position="66"/>
    </location>
    <ligand>
        <name>Zn(2+)</name>
        <dbReference type="ChEBI" id="CHEBI:29105"/>
        <label>1</label>
    </ligand>
</feature>
<feature type="binding site" evidence="2">
    <location>
        <position position="69"/>
    </location>
    <ligand>
        <name>Zn(2+)</name>
        <dbReference type="ChEBI" id="CHEBI:29105"/>
        <label>1</label>
    </ligand>
</feature>
<feature type="binding site" evidence="2">
    <location>
        <position position="81"/>
    </location>
    <ligand>
        <name>Zn(2+)</name>
        <dbReference type="ChEBI" id="CHEBI:29105"/>
        <label>2</label>
    </ligand>
</feature>
<feature type="binding site" evidence="2">
    <location>
        <position position="84"/>
    </location>
    <ligand>
        <name>Zn(2+)</name>
        <dbReference type="ChEBI" id="CHEBI:29105"/>
        <label>2</label>
    </ligand>
</feature>
<feature type="binding site" evidence="1">
    <location>
        <position position="362"/>
    </location>
    <ligand>
        <name>UDP-alpha-D-glucose</name>
        <dbReference type="ChEBI" id="CHEBI:58885"/>
    </ligand>
</feature>
<feature type="binding site" evidence="1">
    <location>
        <position position="368"/>
    </location>
    <ligand>
        <name>UDP-alpha-D-glucose</name>
        <dbReference type="ChEBI" id="CHEBI:58885"/>
    </ligand>
</feature>
<feature type="binding site" evidence="1">
    <location>
        <position position="369"/>
    </location>
    <ligand>
        <name>UDP-alpha-D-glucose</name>
        <dbReference type="ChEBI" id="CHEBI:58885"/>
    </ligand>
</feature>
<feature type="binding site" evidence="1">
    <location>
        <position position="398"/>
    </location>
    <ligand>
        <name>UDP-alpha-D-glucose</name>
        <dbReference type="ChEBI" id="CHEBI:58885"/>
    </ligand>
</feature>
<feature type="binding site" evidence="1">
    <location>
        <position position="539"/>
    </location>
    <ligand>
        <name>UDP-alpha-D-glucose</name>
        <dbReference type="ChEBI" id="CHEBI:58885"/>
    </ligand>
</feature>
<feature type="binding site" evidence="1">
    <location>
        <position position="540"/>
    </location>
    <ligand>
        <name>Mn(2+)</name>
        <dbReference type="ChEBI" id="CHEBI:29035"/>
    </ligand>
</feature>
<feature type="binding site" evidence="1">
    <location>
        <position position="564"/>
    </location>
    <ligand>
        <name>Mn(2+)</name>
        <dbReference type="ChEBI" id="CHEBI:29035"/>
    </ligand>
</feature>
<reference key="1">
    <citation type="journal article" date="2005" name="PLoS Biol.">
        <title>The genomes of Oryza sativa: a history of duplications.</title>
        <authorList>
            <person name="Yu J."/>
            <person name="Wang J."/>
            <person name="Lin W."/>
            <person name="Li S."/>
            <person name="Li H."/>
            <person name="Zhou J."/>
            <person name="Ni P."/>
            <person name="Dong W."/>
            <person name="Hu S."/>
            <person name="Zeng C."/>
            <person name="Zhang J."/>
            <person name="Zhang Y."/>
            <person name="Li R."/>
            <person name="Xu Z."/>
            <person name="Li S."/>
            <person name="Li X."/>
            <person name="Zheng H."/>
            <person name="Cong L."/>
            <person name="Lin L."/>
            <person name="Yin J."/>
            <person name="Geng J."/>
            <person name="Li G."/>
            <person name="Shi J."/>
            <person name="Liu J."/>
            <person name="Lv H."/>
            <person name="Li J."/>
            <person name="Wang J."/>
            <person name="Deng Y."/>
            <person name="Ran L."/>
            <person name="Shi X."/>
            <person name="Wang X."/>
            <person name="Wu Q."/>
            <person name="Li C."/>
            <person name="Ren X."/>
            <person name="Wang J."/>
            <person name="Wang X."/>
            <person name="Li D."/>
            <person name="Liu D."/>
            <person name="Zhang X."/>
            <person name="Ji Z."/>
            <person name="Zhao W."/>
            <person name="Sun Y."/>
            <person name="Zhang Z."/>
            <person name="Bao J."/>
            <person name="Han Y."/>
            <person name="Dong L."/>
            <person name="Ji J."/>
            <person name="Chen P."/>
            <person name="Wu S."/>
            <person name="Liu J."/>
            <person name="Xiao Y."/>
            <person name="Bu D."/>
            <person name="Tan J."/>
            <person name="Yang L."/>
            <person name="Ye C."/>
            <person name="Zhang J."/>
            <person name="Xu J."/>
            <person name="Zhou Y."/>
            <person name="Yu Y."/>
            <person name="Zhang B."/>
            <person name="Zhuang S."/>
            <person name="Wei H."/>
            <person name="Liu B."/>
            <person name="Lei M."/>
            <person name="Yu H."/>
            <person name="Li Y."/>
            <person name="Xu H."/>
            <person name="Wei S."/>
            <person name="He X."/>
            <person name="Fang L."/>
            <person name="Zhang Z."/>
            <person name="Zhang Y."/>
            <person name="Huang X."/>
            <person name="Su Z."/>
            <person name="Tong W."/>
            <person name="Li J."/>
            <person name="Tong Z."/>
            <person name="Li S."/>
            <person name="Ye J."/>
            <person name="Wang L."/>
            <person name="Fang L."/>
            <person name="Lei T."/>
            <person name="Chen C.-S."/>
            <person name="Chen H.-C."/>
            <person name="Xu Z."/>
            <person name="Li H."/>
            <person name="Huang H."/>
            <person name="Zhang F."/>
            <person name="Xu H."/>
            <person name="Li N."/>
            <person name="Zhao C."/>
            <person name="Li S."/>
            <person name="Dong L."/>
            <person name="Huang Y."/>
            <person name="Li L."/>
            <person name="Xi Y."/>
            <person name="Qi Q."/>
            <person name="Li W."/>
            <person name="Zhang B."/>
            <person name="Hu W."/>
            <person name="Zhang Y."/>
            <person name="Tian X."/>
            <person name="Jiao Y."/>
            <person name="Liang X."/>
            <person name="Jin J."/>
            <person name="Gao L."/>
            <person name="Zheng W."/>
            <person name="Hao B."/>
            <person name="Liu S.-M."/>
            <person name="Wang W."/>
            <person name="Yuan L."/>
            <person name="Cao M."/>
            <person name="McDermott J."/>
            <person name="Samudrala R."/>
            <person name="Wang J."/>
            <person name="Wong G.K.-S."/>
            <person name="Yang H."/>
        </authorList>
    </citation>
    <scope>NUCLEOTIDE SEQUENCE [LARGE SCALE GENOMIC DNA]</scope>
    <source>
        <strain>cv. 93-11</strain>
    </source>
</reference>
<dbReference type="EC" id="2.4.1.12" evidence="5"/>
<dbReference type="EMBL" id="CM000128">
    <property type="protein sequence ID" value="EAY92492.1"/>
    <property type="molecule type" value="Genomic_DNA"/>
</dbReference>
<dbReference type="SMR" id="A2XNT2"/>
<dbReference type="STRING" id="39946.A2XNT2"/>
<dbReference type="EnsemblPlants" id="BGIOSGA013897-TA">
    <property type="protein sequence ID" value="BGIOSGA013897-PA"/>
    <property type="gene ID" value="BGIOSGA013897"/>
</dbReference>
<dbReference type="EnsemblPlants" id="OsKYG_03g0040990.01">
    <property type="protein sequence ID" value="OsKYG_03g0040990.01"/>
    <property type="gene ID" value="OsKYG_03g0040990"/>
</dbReference>
<dbReference type="EnsemblPlants" id="OsLaMu_03g0040790.01">
    <property type="protein sequence ID" value="OsLaMu_03g0040790.01"/>
    <property type="gene ID" value="OsLaMu_03g0040790"/>
</dbReference>
<dbReference type="EnsemblPlants" id="OsLima_03g0041080.01">
    <property type="protein sequence ID" value="OsLima_03g0041080.01"/>
    <property type="gene ID" value="OsLima_03g0041080"/>
</dbReference>
<dbReference type="EnsemblPlants" id="OsMH63_03G040720_01">
    <property type="protein sequence ID" value="OsMH63_03G040720_01"/>
    <property type="gene ID" value="OsMH63_03G040720"/>
</dbReference>
<dbReference type="Gramene" id="BGIOSGA013897-TA">
    <property type="protein sequence ID" value="BGIOSGA013897-PA"/>
    <property type="gene ID" value="BGIOSGA013897"/>
</dbReference>
<dbReference type="Gramene" id="OsKYG_03g0040990.01">
    <property type="protein sequence ID" value="OsKYG_03g0040990.01"/>
    <property type="gene ID" value="OsKYG_03g0040990"/>
</dbReference>
<dbReference type="Gramene" id="OsLaMu_03g0040790.01">
    <property type="protein sequence ID" value="OsLaMu_03g0040790.01"/>
    <property type="gene ID" value="OsLaMu_03g0040790"/>
</dbReference>
<dbReference type="Gramene" id="OsLima_03g0041080.01">
    <property type="protein sequence ID" value="OsLima_03g0041080.01"/>
    <property type="gene ID" value="OsLima_03g0041080"/>
</dbReference>
<dbReference type="Gramene" id="OsMH63_03G040720_01">
    <property type="protein sequence ID" value="OsMH63_03G040720_01"/>
    <property type="gene ID" value="OsMH63_03G040720"/>
</dbReference>
<dbReference type="HOGENOM" id="CLU_001418_0_0_1"/>
<dbReference type="OMA" id="HANHTIN"/>
<dbReference type="UniPathway" id="UPA00695"/>
<dbReference type="Proteomes" id="UP000007015">
    <property type="component" value="Chromosome 3"/>
</dbReference>
<dbReference type="GO" id="GO:0005886">
    <property type="term" value="C:plasma membrane"/>
    <property type="evidence" value="ECO:0007669"/>
    <property type="project" value="UniProtKB-SubCell"/>
</dbReference>
<dbReference type="GO" id="GO:0016760">
    <property type="term" value="F:cellulose synthase (UDP-forming) activity"/>
    <property type="evidence" value="ECO:0007669"/>
    <property type="project" value="UniProtKB-EC"/>
</dbReference>
<dbReference type="GO" id="GO:0008270">
    <property type="term" value="F:zinc ion binding"/>
    <property type="evidence" value="ECO:0007669"/>
    <property type="project" value="UniProtKB-KW"/>
</dbReference>
<dbReference type="GO" id="GO:0071555">
    <property type="term" value="P:cell wall organization"/>
    <property type="evidence" value="ECO:0007669"/>
    <property type="project" value="UniProtKB-KW"/>
</dbReference>
<dbReference type="GO" id="GO:0030244">
    <property type="term" value="P:cellulose biosynthetic process"/>
    <property type="evidence" value="ECO:0007669"/>
    <property type="project" value="UniProtKB-KW"/>
</dbReference>
<dbReference type="GO" id="GO:0071669">
    <property type="term" value="P:plant-type cell wall organization or biogenesis"/>
    <property type="evidence" value="ECO:0007669"/>
    <property type="project" value="UniProtKB-ARBA"/>
</dbReference>
<dbReference type="CDD" id="cd16617">
    <property type="entry name" value="mRING-HC-C4C4_CesA"/>
    <property type="match status" value="1"/>
</dbReference>
<dbReference type="FunFam" id="3.30.40.10:FF:000031">
    <property type="entry name" value="Cellulose synthase"/>
    <property type="match status" value="1"/>
</dbReference>
<dbReference type="FunFam" id="3.90.550.10:FF:000009">
    <property type="entry name" value="Cellulose synthase"/>
    <property type="match status" value="1"/>
</dbReference>
<dbReference type="Gene3D" id="3.90.550.10">
    <property type="entry name" value="Spore Coat Polysaccharide Biosynthesis Protein SpsA, Chain A"/>
    <property type="match status" value="1"/>
</dbReference>
<dbReference type="Gene3D" id="3.30.40.10">
    <property type="entry name" value="Zinc/RING finger domain, C3HC4 (zinc finger)"/>
    <property type="match status" value="1"/>
</dbReference>
<dbReference type="InterPro" id="IPR005150">
    <property type="entry name" value="Cellulose_synth"/>
</dbReference>
<dbReference type="InterPro" id="IPR027934">
    <property type="entry name" value="CES_Znf_RING"/>
</dbReference>
<dbReference type="InterPro" id="IPR029044">
    <property type="entry name" value="Nucleotide-diphossugar_trans"/>
</dbReference>
<dbReference type="InterPro" id="IPR001841">
    <property type="entry name" value="Znf_RING"/>
</dbReference>
<dbReference type="InterPro" id="IPR013083">
    <property type="entry name" value="Znf_RING/FYVE/PHD"/>
</dbReference>
<dbReference type="PANTHER" id="PTHR13301">
    <property type="entry name" value="X-BOX TRANSCRIPTION FACTOR-RELATED"/>
    <property type="match status" value="1"/>
</dbReference>
<dbReference type="Pfam" id="PF03552">
    <property type="entry name" value="Cellulose_synt"/>
    <property type="match status" value="1"/>
</dbReference>
<dbReference type="Pfam" id="PF14569">
    <property type="entry name" value="zf-UDP"/>
    <property type="match status" value="1"/>
</dbReference>
<dbReference type="SUPFAM" id="SSF53448">
    <property type="entry name" value="Nucleotide-diphospho-sugar transferases"/>
    <property type="match status" value="1"/>
</dbReference>
<dbReference type="SUPFAM" id="SSF57850">
    <property type="entry name" value="RING/U-box"/>
    <property type="match status" value="1"/>
</dbReference>
<dbReference type="PROSITE" id="PS50089">
    <property type="entry name" value="ZF_RING_2"/>
    <property type="match status" value="1"/>
</dbReference>
<organism>
    <name type="scientific">Oryza sativa subsp. indica</name>
    <name type="common">Rice</name>
    <dbReference type="NCBI Taxonomy" id="39946"/>
    <lineage>
        <taxon>Eukaryota</taxon>
        <taxon>Viridiplantae</taxon>
        <taxon>Streptophyta</taxon>
        <taxon>Embryophyta</taxon>
        <taxon>Tracheophyta</taxon>
        <taxon>Spermatophyta</taxon>
        <taxon>Magnoliopsida</taxon>
        <taxon>Liliopsida</taxon>
        <taxon>Poales</taxon>
        <taxon>Poaceae</taxon>
        <taxon>BOP clade</taxon>
        <taxon>Oryzoideae</taxon>
        <taxon>Oryzeae</taxon>
        <taxon>Oryzinae</taxon>
        <taxon>Oryza</taxon>
        <taxon>Oryza sativa</taxon>
    </lineage>
</organism>
<accession>A2XNT2</accession>
<keyword id="KW-1003">Cell membrane</keyword>
<keyword id="KW-0961">Cell wall biogenesis/degradation</keyword>
<keyword id="KW-0135">Cellulose biosynthesis</keyword>
<keyword id="KW-0175">Coiled coil</keyword>
<keyword id="KW-0328">Glycosyltransferase</keyword>
<keyword id="KW-0464">Manganese</keyword>
<keyword id="KW-0472">Membrane</keyword>
<keyword id="KW-0479">Metal-binding</keyword>
<keyword id="KW-1185">Reference proteome</keyword>
<keyword id="KW-0808">Transferase</keyword>
<keyword id="KW-0812">Transmembrane</keyword>
<keyword id="KW-1133">Transmembrane helix</keyword>
<keyword id="KW-0862">Zinc</keyword>
<keyword id="KW-0863">Zinc-finger</keyword>
<comment type="function">
    <text evidence="2">Probable catalytic subunit of cellulose synthase terminal complexes ('rosettes'), required for beta-1,4-glucan microfibril crystallization, a major mechanism of the cell wall formation.</text>
</comment>
<comment type="catalytic activity">
    <reaction evidence="5">
        <text>[(1-&gt;4)-beta-D-glucosyl](n) + UDP-alpha-D-glucose = [(1-&gt;4)-beta-D-glucosyl](n+1) + UDP + H(+)</text>
        <dbReference type="Rhea" id="RHEA:19929"/>
        <dbReference type="Rhea" id="RHEA-COMP:10033"/>
        <dbReference type="Rhea" id="RHEA-COMP:10034"/>
        <dbReference type="ChEBI" id="CHEBI:15378"/>
        <dbReference type="ChEBI" id="CHEBI:18246"/>
        <dbReference type="ChEBI" id="CHEBI:58223"/>
        <dbReference type="ChEBI" id="CHEBI:58885"/>
        <dbReference type="EC" id="2.4.1.12"/>
    </reaction>
</comment>
<comment type="cofactor">
    <cofactor evidence="1">
        <name>Mn(2+)</name>
        <dbReference type="ChEBI" id="CHEBI:29035"/>
    </cofactor>
</comment>
<comment type="cofactor">
    <cofactor evidence="2">
        <name>Zn(2+)</name>
        <dbReference type="ChEBI" id="CHEBI:29105"/>
    </cofactor>
    <text evidence="2">Binds 2 Zn(2+) ions per subunit.</text>
</comment>
<comment type="pathway">
    <text>Glycan metabolism; plant cellulose biosynthesis.</text>
</comment>
<comment type="subcellular location">
    <subcellularLocation>
        <location evidence="5">Cell membrane</location>
        <topology evidence="5">Multi-pass membrane protein</topology>
    </subcellularLocation>
</comment>
<comment type="similarity">
    <text evidence="5">Belongs to the glycosyltransferase 2 family. Plant cellulose synthase subfamily.</text>
</comment>
<proteinExistence type="inferred from homology"/>